<reference evidence="5 7" key="1">
    <citation type="journal article" date="2006" name="Anim. Sci. J.">
        <title>Molecular cloning and expression analysis of cDNA encoding bovine adipogenin.</title>
        <authorList>
            <person name="Hong Y.H."/>
            <person name="Ogihara Y."/>
            <person name="Hishikawa D."/>
            <person name="Gotoh C."/>
            <person name="Iga T."/>
            <person name="Suzuki Y."/>
            <person name="Song S.H."/>
            <person name="Nakajima K."/>
            <person name="Kozakai T."/>
            <person name="Sasaki S."/>
            <person name="Roh S.G."/>
        </authorList>
    </citation>
    <scope>NUCLEOTIDE SEQUENCE [MRNA]</scope>
    <scope>FUNCTION</scope>
    <scope>TISSUE SPECIFICITY</scope>
    <scope>INDUCTION</scope>
</reference>
<reference evidence="6" key="2">
    <citation type="submission" date="2007-07" db="EMBL/GenBank/DDBJ databases">
        <authorList>
            <consortium name="NIH - Mammalian Gene Collection (MGC) project"/>
        </authorList>
    </citation>
    <scope>NUCLEOTIDE SEQUENCE [LARGE SCALE MRNA]</scope>
    <source>
        <strain evidence="6">Crossbred X Angus</strain>
        <tissue evidence="6">Liver</tissue>
    </source>
</reference>
<proteinExistence type="evidence at transcript level"/>
<name>ADIG_BOVIN</name>
<comment type="function">
    <text evidence="4">Plays a role in stimulating adipocyte differentiation and development.</text>
</comment>
<comment type="subcellular location">
    <subcellularLocation>
        <location evidence="3">Membrane</location>
        <topology evidence="3">Single-pass membrane protein</topology>
    </subcellularLocation>
    <subcellularLocation>
        <location evidence="1">Nucleus</location>
    </subcellularLocation>
</comment>
<comment type="tissue specificity">
    <text evidence="4">Highly expressed in subcutaneous, perirenal and mesecentric adipose tissue.</text>
</comment>
<comment type="induction">
    <text evidence="4">Up-regulated during adipose differentiation of four different kinds of preadipocytes prepared from subcutaneous, perirenal, mesenteric and parametrial adipose tissues.</text>
</comment>
<comment type="similarity">
    <text evidence="5">Belongs to the adipogenin family.</text>
</comment>
<organism>
    <name type="scientific">Bos taurus</name>
    <name type="common">Bovine</name>
    <dbReference type="NCBI Taxonomy" id="9913"/>
    <lineage>
        <taxon>Eukaryota</taxon>
        <taxon>Metazoa</taxon>
        <taxon>Chordata</taxon>
        <taxon>Craniata</taxon>
        <taxon>Vertebrata</taxon>
        <taxon>Euteleostomi</taxon>
        <taxon>Mammalia</taxon>
        <taxon>Eutheria</taxon>
        <taxon>Laurasiatheria</taxon>
        <taxon>Artiodactyla</taxon>
        <taxon>Ruminantia</taxon>
        <taxon>Pecora</taxon>
        <taxon>Bovidae</taxon>
        <taxon>Bovinae</taxon>
        <taxon>Bos</taxon>
    </lineage>
</organism>
<evidence type="ECO:0000250" key="1"/>
<evidence type="ECO:0000250" key="2">
    <source>
        <dbReference type="UniProtKB" id="Q0VDE8"/>
    </source>
</evidence>
<evidence type="ECO:0000255" key="3"/>
<evidence type="ECO:0000269" key="4">
    <source ref="1"/>
</evidence>
<evidence type="ECO:0000305" key="5"/>
<evidence type="ECO:0000312" key="6">
    <source>
        <dbReference type="EMBL" id="AAI20475.1"/>
    </source>
</evidence>
<evidence type="ECO:0000312" key="7">
    <source>
        <dbReference type="EMBL" id="ABD14393.1"/>
    </source>
</evidence>
<dbReference type="EMBL" id="DQ372929">
    <property type="protein sequence ID" value="ABD14393.1"/>
    <property type="molecule type" value="mRNA"/>
</dbReference>
<dbReference type="EMBL" id="BC120474">
    <property type="protein sequence ID" value="AAI20475.1"/>
    <property type="molecule type" value="mRNA"/>
</dbReference>
<dbReference type="EMBL" id="BC151417">
    <property type="protein sequence ID" value="AAI51418.1"/>
    <property type="molecule type" value="mRNA"/>
</dbReference>
<dbReference type="RefSeq" id="NP_001107192.1">
    <property type="nucleotide sequence ID" value="NM_001113720.2"/>
</dbReference>
<dbReference type="RefSeq" id="XP_015329625.1">
    <property type="nucleotide sequence ID" value="XM_015474139.3"/>
</dbReference>
<dbReference type="SMR" id="Q2EMW0"/>
<dbReference type="FunCoup" id="Q2EMW0">
    <property type="interactions" value="56"/>
</dbReference>
<dbReference type="STRING" id="9913.ENSBTAP00000041676"/>
<dbReference type="PaxDb" id="9913-ENSBTAP00000041676"/>
<dbReference type="Ensembl" id="ENSBTAT00000044163.3">
    <property type="protein sequence ID" value="ENSBTAP00000041676.1"/>
    <property type="gene ID" value="ENSBTAG00000031188.3"/>
</dbReference>
<dbReference type="GeneID" id="510677"/>
<dbReference type="KEGG" id="bta:510677"/>
<dbReference type="CTD" id="149685"/>
<dbReference type="VEuPathDB" id="HostDB:ENSBTAG00000031188"/>
<dbReference type="VGNC" id="VGNC:25676">
    <property type="gene designation" value="ADIG"/>
</dbReference>
<dbReference type="eggNOG" id="ENOG502SXJP">
    <property type="taxonomic scope" value="Eukaryota"/>
</dbReference>
<dbReference type="GeneTree" id="ENSGT00390000018723"/>
<dbReference type="HOGENOM" id="CLU_2605436_0_0_1"/>
<dbReference type="InParanoid" id="Q2EMW0"/>
<dbReference type="OMA" id="QGPAEFC"/>
<dbReference type="OrthoDB" id="9426851at2759"/>
<dbReference type="Proteomes" id="UP000009136">
    <property type="component" value="Chromosome 13"/>
</dbReference>
<dbReference type="Bgee" id="ENSBTAG00000031188">
    <property type="expression patterns" value="Expressed in subcutaneous adipose tissue and 52 other cell types or tissues"/>
</dbReference>
<dbReference type="GO" id="GO:0005737">
    <property type="term" value="C:cytoplasm"/>
    <property type="evidence" value="ECO:0000250"/>
    <property type="project" value="HGNC-UCL"/>
</dbReference>
<dbReference type="GO" id="GO:0005811">
    <property type="term" value="C:lipid droplet"/>
    <property type="evidence" value="ECO:0000318"/>
    <property type="project" value="GO_Central"/>
</dbReference>
<dbReference type="GO" id="GO:0016020">
    <property type="term" value="C:membrane"/>
    <property type="evidence" value="ECO:0007669"/>
    <property type="project" value="UniProtKB-SubCell"/>
</dbReference>
<dbReference type="GO" id="GO:0005634">
    <property type="term" value="C:nucleus"/>
    <property type="evidence" value="ECO:0000250"/>
    <property type="project" value="HGNC-UCL"/>
</dbReference>
<dbReference type="GO" id="GO:0050873">
    <property type="term" value="P:brown fat cell differentiation"/>
    <property type="evidence" value="ECO:0000250"/>
    <property type="project" value="HGNC-UCL"/>
</dbReference>
<dbReference type="GO" id="GO:0045600">
    <property type="term" value="P:positive regulation of fat cell differentiation"/>
    <property type="evidence" value="ECO:0000250"/>
    <property type="project" value="HGNC-UCL"/>
</dbReference>
<dbReference type="GO" id="GO:0007283">
    <property type="term" value="P:spermatogenesis"/>
    <property type="evidence" value="ECO:0007669"/>
    <property type="project" value="Ensembl"/>
</dbReference>
<dbReference type="GO" id="GO:0050872">
    <property type="term" value="P:white fat cell differentiation"/>
    <property type="evidence" value="ECO:0000318"/>
    <property type="project" value="GO_Central"/>
</dbReference>
<dbReference type="InterPro" id="IPR027938">
    <property type="entry name" value="Adipogenin"/>
</dbReference>
<dbReference type="PANTHER" id="PTHR38499">
    <property type="entry name" value="ADIPOGENIN"/>
    <property type="match status" value="1"/>
</dbReference>
<dbReference type="PANTHER" id="PTHR38499:SF1">
    <property type="entry name" value="ADIPOGENIN"/>
    <property type="match status" value="1"/>
</dbReference>
<dbReference type="Pfam" id="PF15202">
    <property type="entry name" value="Adipogenin"/>
    <property type="match status" value="1"/>
</dbReference>
<keyword id="KW-0472">Membrane</keyword>
<keyword id="KW-0539">Nucleus</keyword>
<keyword id="KW-1185">Reference proteome</keyword>
<keyword id="KW-0812">Transmembrane</keyword>
<keyword id="KW-1133">Transmembrane helix</keyword>
<feature type="chain" id="PRO_0000296374" description="Adipogenin">
    <location>
        <begin position="1"/>
        <end position="81"/>
    </location>
</feature>
<feature type="transmembrane region" description="Helical" evidence="3">
    <location>
        <begin position="16"/>
        <end position="36"/>
    </location>
</feature>
<protein>
    <recommendedName>
        <fullName>Adipogenin</fullName>
    </recommendedName>
</protein>
<sequence>MKYPLVPLVNELTFSFLVFWLCLPVALLLFLLIIWLRFLLSQDSEENDSDVCLDWEPWSKNPDEFCQEEMLHSQEEERPCC</sequence>
<gene>
    <name evidence="2" type="primary">ADIG</name>
</gene>
<accession>Q2EMW0</accession>
<accession>A7MB91</accession>